<organism>
    <name type="scientific">Halalkalibacterium halodurans (strain ATCC BAA-125 / DSM 18197 / FERM 7344 / JCM 9153 / C-125)</name>
    <name type="common">Bacillus halodurans</name>
    <dbReference type="NCBI Taxonomy" id="272558"/>
    <lineage>
        <taxon>Bacteria</taxon>
        <taxon>Bacillati</taxon>
        <taxon>Bacillota</taxon>
        <taxon>Bacilli</taxon>
        <taxon>Bacillales</taxon>
        <taxon>Bacillaceae</taxon>
        <taxon>Halalkalibacterium (ex Joshi et al. 2022)</taxon>
    </lineage>
</organism>
<name>MINC_HALH5</name>
<accession>Q9K8H8</accession>
<keyword id="KW-0131">Cell cycle</keyword>
<keyword id="KW-0132">Cell division</keyword>
<keyword id="KW-1185">Reference proteome</keyword>
<keyword id="KW-0717">Septation</keyword>
<comment type="function">
    <text evidence="1">Cell division inhibitor that blocks the formation of polar Z ring septums. Rapidly oscillates between the poles of the cell to destabilize FtsZ filaments that have formed before they mature into polar Z rings. Prevents FtsZ polymerization (By similarity).</text>
</comment>
<comment type="subunit">
    <text evidence="1">Interacts with MinD and FtsZ.</text>
</comment>
<comment type="similarity">
    <text evidence="2">Belongs to the MinC family.</text>
</comment>
<evidence type="ECO:0000250" key="1"/>
<evidence type="ECO:0000305" key="2"/>
<proteinExistence type="inferred from homology"/>
<sequence>MTTQKKQAVTIKGTKDGLTFHLDDRCSFDSIVGELAEKLSSKHYQMEDQPRIQVKVDVGYRYLTVEQKRHIQELITDGRNLDVEEFVSQVMTKEEAEEKRKEAQIVSVAKVIRSGQVFSVDGDLLLIGDVNPGGTIRASGNIFVIGSLRGIAHAGYKGNGEAVIATSHMAPAQLRIGEQIFHWSKEEQQAGDRIMECAYIASDTNEIQLDRVQKLLKIRPNLATFLDEMVEQ</sequence>
<protein>
    <recommendedName>
        <fullName>Probable septum site-determining protein MinC</fullName>
    </recommendedName>
</protein>
<gene>
    <name type="primary">minC</name>
    <name type="ordered locus">BH3028</name>
</gene>
<reference key="1">
    <citation type="journal article" date="2000" name="Nucleic Acids Res.">
        <title>Complete genome sequence of the alkaliphilic bacterium Bacillus halodurans and genomic sequence comparison with Bacillus subtilis.</title>
        <authorList>
            <person name="Takami H."/>
            <person name="Nakasone K."/>
            <person name="Takaki Y."/>
            <person name="Maeno G."/>
            <person name="Sasaki R."/>
            <person name="Masui N."/>
            <person name="Fuji F."/>
            <person name="Hirama C."/>
            <person name="Nakamura Y."/>
            <person name="Ogasawara N."/>
            <person name="Kuhara S."/>
            <person name="Horikoshi K."/>
        </authorList>
    </citation>
    <scope>NUCLEOTIDE SEQUENCE [LARGE SCALE GENOMIC DNA]</scope>
    <source>
        <strain>ATCC BAA-125 / DSM 18197 / FERM 7344 / JCM 9153 / C-125</strain>
    </source>
</reference>
<feature type="chain" id="PRO_0000189016" description="Probable septum site-determining protein MinC">
    <location>
        <begin position="1"/>
        <end position="232"/>
    </location>
</feature>
<dbReference type="EMBL" id="BA000004">
    <property type="protein sequence ID" value="BAB06747.1"/>
    <property type="molecule type" value="Genomic_DNA"/>
</dbReference>
<dbReference type="PIR" id="D84028">
    <property type="entry name" value="D84028"/>
</dbReference>
<dbReference type="RefSeq" id="WP_010899172.1">
    <property type="nucleotide sequence ID" value="NC_002570.2"/>
</dbReference>
<dbReference type="SMR" id="Q9K8H8"/>
<dbReference type="STRING" id="272558.gene:10728938"/>
<dbReference type="GeneID" id="87598550"/>
<dbReference type="KEGG" id="bha:BH3028"/>
<dbReference type="eggNOG" id="COG0850">
    <property type="taxonomic scope" value="Bacteria"/>
</dbReference>
<dbReference type="HOGENOM" id="CLU_048711_1_1_9"/>
<dbReference type="OrthoDB" id="9790810at2"/>
<dbReference type="Proteomes" id="UP000001258">
    <property type="component" value="Chromosome"/>
</dbReference>
<dbReference type="GO" id="GO:0000902">
    <property type="term" value="P:cell morphogenesis"/>
    <property type="evidence" value="ECO:0007669"/>
    <property type="project" value="InterPro"/>
</dbReference>
<dbReference type="GO" id="GO:0000917">
    <property type="term" value="P:division septum assembly"/>
    <property type="evidence" value="ECO:0007669"/>
    <property type="project" value="UniProtKB-KW"/>
</dbReference>
<dbReference type="GO" id="GO:1901891">
    <property type="term" value="P:regulation of cell septum assembly"/>
    <property type="evidence" value="ECO:0007669"/>
    <property type="project" value="InterPro"/>
</dbReference>
<dbReference type="Gene3D" id="2.160.20.70">
    <property type="match status" value="1"/>
</dbReference>
<dbReference type="Gene3D" id="3.30.160.540">
    <property type="match status" value="1"/>
</dbReference>
<dbReference type="HAMAP" id="MF_00267">
    <property type="entry name" value="MinC"/>
    <property type="match status" value="1"/>
</dbReference>
<dbReference type="InterPro" id="IPR016098">
    <property type="entry name" value="CAP/MinC_C"/>
</dbReference>
<dbReference type="InterPro" id="IPR013033">
    <property type="entry name" value="MinC"/>
</dbReference>
<dbReference type="InterPro" id="IPR036145">
    <property type="entry name" value="MinC_C_sf"/>
</dbReference>
<dbReference type="InterPro" id="IPR055219">
    <property type="entry name" value="MinC_N_1"/>
</dbReference>
<dbReference type="InterPro" id="IPR005526">
    <property type="entry name" value="Septum_form_inhib_MinC_C"/>
</dbReference>
<dbReference type="NCBIfam" id="TIGR01222">
    <property type="entry name" value="minC"/>
    <property type="match status" value="1"/>
</dbReference>
<dbReference type="PANTHER" id="PTHR34108">
    <property type="entry name" value="SEPTUM SITE-DETERMINING PROTEIN MINC"/>
    <property type="match status" value="1"/>
</dbReference>
<dbReference type="PANTHER" id="PTHR34108:SF1">
    <property type="entry name" value="SEPTUM SITE-DETERMINING PROTEIN MINC"/>
    <property type="match status" value="1"/>
</dbReference>
<dbReference type="Pfam" id="PF03775">
    <property type="entry name" value="MinC_C"/>
    <property type="match status" value="1"/>
</dbReference>
<dbReference type="Pfam" id="PF22642">
    <property type="entry name" value="MinC_N_1"/>
    <property type="match status" value="1"/>
</dbReference>
<dbReference type="SUPFAM" id="SSF63848">
    <property type="entry name" value="Cell-division inhibitor MinC, C-terminal domain"/>
    <property type="match status" value="1"/>
</dbReference>